<organism>
    <name type="scientific">Pan troglodytes</name>
    <name type="common">Chimpanzee</name>
    <dbReference type="NCBI Taxonomy" id="9598"/>
    <lineage>
        <taxon>Eukaryota</taxon>
        <taxon>Metazoa</taxon>
        <taxon>Chordata</taxon>
        <taxon>Craniata</taxon>
        <taxon>Vertebrata</taxon>
        <taxon>Euteleostomi</taxon>
        <taxon>Mammalia</taxon>
        <taxon>Eutheria</taxon>
        <taxon>Euarchontoglires</taxon>
        <taxon>Primates</taxon>
        <taxon>Haplorrhini</taxon>
        <taxon>Catarrhini</taxon>
        <taxon>Hominidae</taxon>
        <taxon>Pan</taxon>
    </lineage>
</organism>
<protein>
    <recommendedName>
        <fullName>Olfactory receptor 1A1</fullName>
    </recommendedName>
</protein>
<proteinExistence type="inferred from homology"/>
<reference key="1">
    <citation type="journal article" date="1999" name="Genomics">
        <title>Primate evolution of an olfactory receptor cluster: diversification by gene conversion and recent emergence of pseudogenes.</title>
        <authorList>
            <person name="Sharon D."/>
            <person name="Glusman G."/>
            <person name="Pilpel Y."/>
            <person name="Khen M."/>
            <person name="Gruetzner F."/>
            <person name="Haaf T."/>
            <person name="Lancet D."/>
        </authorList>
    </citation>
    <scope>NUCLEOTIDE SEQUENCE [GENOMIC DNA]</scope>
</reference>
<sequence>MRENNQSSTLEFILLGVTGQQEQEDFFYILFLFIYPITLIGNLLIVLAICSDVHLHNPMYFLLANLSLVDIFFSSVTIPKMLANHLLGSKSISFGGCLTQMYFMIALGNTDSYILAAMAYDRAVAISRPLHYTTIMSPRSCIWLIAGSWVIGNANALPHTLLTASLSFCGNQEVANFYCDITPLLKLSCSDIHFHVKMMYLGVGIFSVPLLCIIVSYIRVFSTVFQVPSTKGVLKAFSTCGSHLTVVSLYYGTVMGMYFRPLTNYSLKDAVITVMYTAVTPMLNPFIYSLRNRDVKAALRKLFNKRISS</sequence>
<keyword id="KW-1003">Cell membrane</keyword>
<keyword id="KW-1015">Disulfide bond</keyword>
<keyword id="KW-0297">G-protein coupled receptor</keyword>
<keyword id="KW-0325">Glycoprotein</keyword>
<keyword id="KW-0472">Membrane</keyword>
<keyword id="KW-0552">Olfaction</keyword>
<keyword id="KW-0675">Receptor</keyword>
<keyword id="KW-1185">Reference proteome</keyword>
<keyword id="KW-0716">Sensory transduction</keyword>
<keyword id="KW-0807">Transducer</keyword>
<keyword id="KW-0812">Transmembrane</keyword>
<keyword id="KW-1133">Transmembrane helix</keyword>
<accession>Q9TUA7</accession>
<gene>
    <name type="primary">OR1A1</name>
</gene>
<comment type="function">
    <text evidence="3">Odorant receptor.</text>
</comment>
<comment type="subcellular location">
    <subcellularLocation>
        <location>Cell membrane</location>
        <topology>Multi-pass membrane protein</topology>
    </subcellularLocation>
</comment>
<comment type="similarity">
    <text evidence="2">Belongs to the G-protein coupled receptor 1 family.</text>
</comment>
<feature type="chain" id="PRO_0000150414" description="Olfactory receptor 1A1">
    <location>
        <begin position="1"/>
        <end position="309"/>
    </location>
</feature>
<feature type="topological domain" description="Extracellular" evidence="1">
    <location>
        <begin position="1"/>
        <end position="25"/>
    </location>
</feature>
<feature type="transmembrane region" description="Helical; Name=1" evidence="1">
    <location>
        <begin position="26"/>
        <end position="49"/>
    </location>
</feature>
<feature type="topological domain" description="Cytoplasmic" evidence="1">
    <location>
        <begin position="50"/>
        <end position="57"/>
    </location>
</feature>
<feature type="transmembrane region" description="Helical; Name=2" evidence="1">
    <location>
        <begin position="58"/>
        <end position="79"/>
    </location>
</feature>
<feature type="topological domain" description="Extracellular" evidence="1">
    <location>
        <begin position="80"/>
        <end position="100"/>
    </location>
</feature>
<feature type="transmembrane region" description="Helical; Name=3" evidence="1">
    <location>
        <begin position="101"/>
        <end position="120"/>
    </location>
</feature>
<feature type="topological domain" description="Cytoplasmic" evidence="1">
    <location>
        <begin position="121"/>
        <end position="139"/>
    </location>
</feature>
<feature type="transmembrane region" description="Helical; Name=4" evidence="1">
    <location>
        <begin position="140"/>
        <end position="158"/>
    </location>
</feature>
<feature type="topological domain" description="Extracellular" evidence="1">
    <location>
        <begin position="159"/>
        <end position="195"/>
    </location>
</feature>
<feature type="transmembrane region" description="Helical; Name=5" evidence="1">
    <location>
        <begin position="196"/>
        <end position="218"/>
    </location>
</feature>
<feature type="topological domain" description="Cytoplasmic" evidence="1">
    <location>
        <begin position="219"/>
        <end position="235"/>
    </location>
</feature>
<feature type="transmembrane region" description="Helical; Name=6" evidence="1">
    <location>
        <begin position="236"/>
        <end position="258"/>
    </location>
</feature>
<feature type="topological domain" description="Extracellular" evidence="1">
    <location>
        <begin position="259"/>
        <end position="270"/>
    </location>
</feature>
<feature type="transmembrane region" description="Helical; Name=7" evidence="1">
    <location>
        <begin position="271"/>
        <end position="290"/>
    </location>
</feature>
<feature type="topological domain" description="Cytoplasmic" evidence="1">
    <location>
        <begin position="291"/>
        <end position="309"/>
    </location>
</feature>
<feature type="glycosylation site" description="N-linked (GlcNAc...) asparagine" evidence="1">
    <location>
        <position position="5"/>
    </location>
</feature>
<feature type="glycosylation site" description="N-linked (GlcNAc...) asparagine" evidence="1">
    <location>
        <position position="264"/>
    </location>
</feature>
<feature type="disulfide bond" evidence="2">
    <location>
        <begin position="97"/>
        <end position="189"/>
    </location>
</feature>
<dbReference type="EMBL" id="AF101732">
    <property type="protein sequence ID" value="AAF03317.1"/>
    <property type="molecule type" value="Genomic_DNA"/>
</dbReference>
<dbReference type="RefSeq" id="NP_001009115.1">
    <property type="nucleotide sequence ID" value="NM_001009115.1"/>
</dbReference>
<dbReference type="RefSeq" id="XP_054525812.1">
    <property type="nucleotide sequence ID" value="XM_054669837.2"/>
</dbReference>
<dbReference type="RefSeq" id="XP_054525813.1">
    <property type="nucleotide sequence ID" value="XM_054669838.2"/>
</dbReference>
<dbReference type="SMR" id="Q9TUA7"/>
<dbReference type="FunCoup" id="Q9TUA7">
    <property type="interactions" value="330"/>
</dbReference>
<dbReference type="STRING" id="9598.ENSPTRP00000014611"/>
<dbReference type="GlyCosmos" id="Q9TUA7">
    <property type="glycosylation" value="2 sites, No reported glycans"/>
</dbReference>
<dbReference type="PaxDb" id="9598-ENSPTRP00000014611"/>
<dbReference type="Ensembl" id="ENSPTRT00000015791.2">
    <property type="protein sequence ID" value="ENSPTRP00000014611.1"/>
    <property type="gene ID" value="ENSPTRG00000008560.2"/>
</dbReference>
<dbReference type="GeneID" id="468149"/>
<dbReference type="CTD" id="8383"/>
<dbReference type="VGNC" id="VGNC:9491">
    <property type="gene designation" value="OR1A1"/>
</dbReference>
<dbReference type="eggNOG" id="ENOG502TF5D">
    <property type="taxonomic scope" value="Eukaryota"/>
</dbReference>
<dbReference type="GeneTree" id="ENSGT00900000141057"/>
<dbReference type="HOGENOM" id="CLU_012526_5_5_1"/>
<dbReference type="InParanoid" id="Q9TUA7"/>
<dbReference type="OMA" id="QEDFFFT"/>
<dbReference type="TreeFam" id="TF337210"/>
<dbReference type="Proteomes" id="UP000002277">
    <property type="component" value="Chromosome 17"/>
</dbReference>
<dbReference type="GO" id="GO:0005886">
    <property type="term" value="C:plasma membrane"/>
    <property type="evidence" value="ECO:0000318"/>
    <property type="project" value="GO_Central"/>
</dbReference>
<dbReference type="GO" id="GO:0004930">
    <property type="term" value="F:G protein-coupled receptor activity"/>
    <property type="evidence" value="ECO:0007669"/>
    <property type="project" value="UniProtKB-KW"/>
</dbReference>
<dbReference type="GO" id="GO:0004984">
    <property type="term" value="F:olfactory receptor activity"/>
    <property type="evidence" value="ECO:0000318"/>
    <property type="project" value="GO_Central"/>
</dbReference>
<dbReference type="GO" id="GO:0007165">
    <property type="term" value="P:signal transduction"/>
    <property type="evidence" value="ECO:0000318"/>
    <property type="project" value="GO_Central"/>
</dbReference>
<dbReference type="CDD" id="cd15235">
    <property type="entry name" value="7tmA_OR1A-like"/>
    <property type="match status" value="1"/>
</dbReference>
<dbReference type="FunFam" id="1.10.1220.70:FF:000001">
    <property type="entry name" value="Olfactory receptor"/>
    <property type="match status" value="1"/>
</dbReference>
<dbReference type="FunFam" id="1.20.1070.10:FF:000082">
    <property type="entry name" value="Olfactory receptor 1A1"/>
    <property type="match status" value="1"/>
</dbReference>
<dbReference type="Gene3D" id="1.20.1070.10">
    <property type="entry name" value="Rhodopsin 7-helix transmembrane proteins"/>
    <property type="match status" value="1"/>
</dbReference>
<dbReference type="InterPro" id="IPR000276">
    <property type="entry name" value="GPCR_Rhodpsn"/>
</dbReference>
<dbReference type="InterPro" id="IPR017452">
    <property type="entry name" value="GPCR_Rhodpsn_7TM"/>
</dbReference>
<dbReference type="InterPro" id="IPR000725">
    <property type="entry name" value="Olfact_rcpt"/>
</dbReference>
<dbReference type="PANTHER" id="PTHR48001">
    <property type="entry name" value="OLFACTORY RECEPTOR"/>
    <property type="match status" value="1"/>
</dbReference>
<dbReference type="Pfam" id="PF13853">
    <property type="entry name" value="7tm_4"/>
    <property type="match status" value="1"/>
</dbReference>
<dbReference type="PRINTS" id="PR00237">
    <property type="entry name" value="GPCRRHODOPSN"/>
</dbReference>
<dbReference type="PRINTS" id="PR00245">
    <property type="entry name" value="OLFACTORYR"/>
</dbReference>
<dbReference type="SUPFAM" id="SSF81321">
    <property type="entry name" value="Family A G protein-coupled receptor-like"/>
    <property type="match status" value="1"/>
</dbReference>
<dbReference type="PROSITE" id="PS50262">
    <property type="entry name" value="G_PROTEIN_RECEP_F1_2"/>
    <property type="match status" value="1"/>
</dbReference>
<evidence type="ECO:0000255" key="1"/>
<evidence type="ECO:0000255" key="2">
    <source>
        <dbReference type="PROSITE-ProRule" id="PRU00521"/>
    </source>
</evidence>
<evidence type="ECO:0000305" key="3"/>
<name>OR1A1_PANTR</name>